<dbReference type="EC" id="4.6.1.12" evidence="1"/>
<dbReference type="EMBL" id="CP001100">
    <property type="protein sequence ID" value="ACF13036.1"/>
    <property type="molecule type" value="Genomic_DNA"/>
</dbReference>
<dbReference type="RefSeq" id="WP_012499120.1">
    <property type="nucleotide sequence ID" value="NC_011026.1"/>
</dbReference>
<dbReference type="SMR" id="B3QV82"/>
<dbReference type="STRING" id="517418.Ctha_0565"/>
<dbReference type="KEGG" id="cts:Ctha_0565"/>
<dbReference type="eggNOG" id="COG0245">
    <property type="taxonomic scope" value="Bacteria"/>
</dbReference>
<dbReference type="HOGENOM" id="CLU_084630_2_0_10"/>
<dbReference type="OrthoDB" id="9804336at2"/>
<dbReference type="UniPathway" id="UPA00056">
    <property type="reaction ID" value="UER00095"/>
</dbReference>
<dbReference type="Proteomes" id="UP000001208">
    <property type="component" value="Chromosome"/>
</dbReference>
<dbReference type="GO" id="GO:0008685">
    <property type="term" value="F:2-C-methyl-D-erythritol 2,4-cyclodiphosphate synthase activity"/>
    <property type="evidence" value="ECO:0007669"/>
    <property type="project" value="UniProtKB-UniRule"/>
</dbReference>
<dbReference type="GO" id="GO:0046872">
    <property type="term" value="F:metal ion binding"/>
    <property type="evidence" value="ECO:0007669"/>
    <property type="project" value="UniProtKB-KW"/>
</dbReference>
<dbReference type="GO" id="GO:0019288">
    <property type="term" value="P:isopentenyl diphosphate biosynthetic process, methylerythritol 4-phosphate pathway"/>
    <property type="evidence" value="ECO:0007669"/>
    <property type="project" value="UniProtKB-UniRule"/>
</dbReference>
<dbReference type="GO" id="GO:0016114">
    <property type="term" value="P:terpenoid biosynthetic process"/>
    <property type="evidence" value="ECO:0007669"/>
    <property type="project" value="InterPro"/>
</dbReference>
<dbReference type="CDD" id="cd00554">
    <property type="entry name" value="MECDP_synthase"/>
    <property type="match status" value="1"/>
</dbReference>
<dbReference type="FunFam" id="3.30.1330.50:FF:000001">
    <property type="entry name" value="2-C-methyl-D-erythritol 2,4-cyclodiphosphate synthase"/>
    <property type="match status" value="1"/>
</dbReference>
<dbReference type="Gene3D" id="3.30.1330.50">
    <property type="entry name" value="2-C-methyl-D-erythritol 2,4-cyclodiphosphate synthase"/>
    <property type="match status" value="1"/>
</dbReference>
<dbReference type="HAMAP" id="MF_00107">
    <property type="entry name" value="IspF"/>
    <property type="match status" value="1"/>
</dbReference>
<dbReference type="InterPro" id="IPR003526">
    <property type="entry name" value="MECDP_synthase"/>
</dbReference>
<dbReference type="InterPro" id="IPR020555">
    <property type="entry name" value="MECDP_synthase_CS"/>
</dbReference>
<dbReference type="InterPro" id="IPR036571">
    <property type="entry name" value="MECDP_synthase_sf"/>
</dbReference>
<dbReference type="NCBIfam" id="TIGR00151">
    <property type="entry name" value="ispF"/>
    <property type="match status" value="1"/>
</dbReference>
<dbReference type="PANTHER" id="PTHR43181">
    <property type="entry name" value="2-C-METHYL-D-ERYTHRITOL 2,4-CYCLODIPHOSPHATE SYNTHASE, CHLOROPLASTIC"/>
    <property type="match status" value="1"/>
</dbReference>
<dbReference type="PANTHER" id="PTHR43181:SF1">
    <property type="entry name" value="2-C-METHYL-D-ERYTHRITOL 2,4-CYCLODIPHOSPHATE SYNTHASE, CHLOROPLASTIC"/>
    <property type="match status" value="1"/>
</dbReference>
<dbReference type="Pfam" id="PF02542">
    <property type="entry name" value="YgbB"/>
    <property type="match status" value="1"/>
</dbReference>
<dbReference type="SUPFAM" id="SSF69765">
    <property type="entry name" value="IpsF-like"/>
    <property type="match status" value="1"/>
</dbReference>
<dbReference type="PROSITE" id="PS01350">
    <property type="entry name" value="ISPF"/>
    <property type="match status" value="1"/>
</dbReference>
<sequence>MRIGIGIDIHQLVEGRKLIIGGVEIPYEKGLKGHSDADVLLHAISDALLGAAALGDIGKHFPDTDPAYKGIDSQLLLKHVRKLLETHGYKPVNVDSMLLLEKPKIAPHVQKMRENIAACLEVDVDAISVKATTNEKIGYVGRGEGALAHAVCLIEKI</sequence>
<reference key="1">
    <citation type="submission" date="2008-06" db="EMBL/GenBank/DDBJ databases">
        <title>Complete sequence of Chloroherpeton thalassium ATCC 35110.</title>
        <authorList>
            <consortium name="US DOE Joint Genome Institute"/>
            <person name="Lucas S."/>
            <person name="Copeland A."/>
            <person name="Lapidus A."/>
            <person name="Glavina del Rio T."/>
            <person name="Dalin E."/>
            <person name="Tice H."/>
            <person name="Bruce D."/>
            <person name="Goodwin L."/>
            <person name="Pitluck S."/>
            <person name="Schmutz J."/>
            <person name="Larimer F."/>
            <person name="Land M."/>
            <person name="Hauser L."/>
            <person name="Kyrpides N."/>
            <person name="Mikhailova N."/>
            <person name="Liu Z."/>
            <person name="Li T."/>
            <person name="Zhao F."/>
            <person name="Overmann J."/>
            <person name="Bryant D.A."/>
            <person name="Richardson P."/>
        </authorList>
    </citation>
    <scope>NUCLEOTIDE SEQUENCE [LARGE SCALE GENOMIC DNA]</scope>
    <source>
        <strain>ATCC 35110 / GB-78</strain>
    </source>
</reference>
<evidence type="ECO:0000255" key="1">
    <source>
        <dbReference type="HAMAP-Rule" id="MF_00107"/>
    </source>
</evidence>
<accession>B3QV82</accession>
<keyword id="KW-0414">Isoprene biosynthesis</keyword>
<keyword id="KW-0456">Lyase</keyword>
<keyword id="KW-0479">Metal-binding</keyword>
<keyword id="KW-1185">Reference proteome</keyword>
<organism>
    <name type="scientific">Chloroherpeton thalassium (strain ATCC 35110 / GB-78)</name>
    <dbReference type="NCBI Taxonomy" id="517418"/>
    <lineage>
        <taxon>Bacteria</taxon>
        <taxon>Pseudomonadati</taxon>
        <taxon>Chlorobiota</taxon>
        <taxon>Chlorobiia</taxon>
        <taxon>Chlorobiales</taxon>
        <taxon>Chloroherpetonaceae</taxon>
        <taxon>Chloroherpeton</taxon>
    </lineage>
</organism>
<feature type="chain" id="PRO_1000094250" description="2-C-methyl-D-erythritol 2,4-cyclodiphosphate synthase">
    <location>
        <begin position="1"/>
        <end position="157"/>
    </location>
</feature>
<feature type="binding site" evidence="1">
    <location>
        <begin position="8"/>
        <end position="10"/>
    </location>
    <ligand>
        <name>4-CDP-2-C-methyl-D-erythritol 2-phosphate</name>
        <dbReference type="ChEBI" id="CHEBI:57919"/>
    </ligand>
</feature>
<feature type="binding site" evidence="1">
    <location>
        <position position="8"/>
    </location>
    <ligand>
        <name>a divalent metal cation</name>
        <dbReference type="ChEBI" id="CHEBI:60240"/>
    </ligand>
</feature>
<feature type="binding site" evidence="1">
    <location>
        <position position="10"/>
    </location>
    <ligand>
        <name>a divalent metal cation</name>
        <dbReference type="ChEBI" id="CHEBI:60240"/>
    </ligand>
</feature>
<feature type="binding site" evidence="1">
    <location>
        <begin position="34"/>
        <end position="35"/>
    </location>
    <ligand>
        <name>4-CDP-2-C-methyl-D-erythritol 2-phosphate</name>
        <dbReference type="ChEBI" id="CHEBI:57919"/>
    </ligand>
</feature>
<feature type="binding site" evidence="1">
    <location>
        <position position="42"/>
    </location>
    <ligand>
        <name>a divalent metal cation</name>
        <dbReference type="ChEBI" id="CHEBI:60240"/>
    </ligand>
</feature>
<feature type="binding site" evidence="1">
    <location>
        <begin position="56"/>
        <end position="58"/>
    </location>
    <ligand>
        <name>4-CDP-2-C-methyl-D-erythritol 2-phosphate</name>
        <dbReference type="ChEBI" id="CHEBI:57919"/>
    </ligand>
</feature>
<feature type="binding site" evidence="1">
    <location>
        <begin position="61"/>
        <end position="65"/>
    </location>
    <ligand>
        <name>4-CDP-2-C-methyl-D-erythritol 2-phosphate</name>
        <dbReference type="ChEBI" id="CHEBI:57919"/>
    </ligand>
</feature>
<feature type="binding site" evidence="1">
    <location>
        <begin position="132"/>
        <end position="135"/>
    </location>
    <ligand>
        <name>4-CDP-2-C-methyl-D-erythritol 2-phosphate</name>
        <dbReference type="ChEBI" id="CHEBI:57919"/>
    </ligand>
</feature>
<feature type="binding site" evidence="1">
    <location>
        <position position="142"/>
    </location>
    <ligand>
        <name>4-CDP-2-C-methyl-D-erythritol 2-phosphate</name>
        <dbReference type="ChEBI" id="CHEBI:57919"/>
    </ligand>
</feature>
<feature type="site" description="Transition state stabilizer" evidence="1">
    <location>
        <position position="34"/>
    </location>
</feature>
<feature type="site" description="Transition state stabilizer" evidence="1">
    <location>
        <position position="133"/>
    </location>
</feature>
<name>ISPF_CHLT3</name>
<protein>
    <recommendedName>
        <fullName evidence="1">2-C-methyl-D-erythritol 2,4-cyclodiphosphate synthase</fullName>
        <shortName evidence="1">MECDP-synthase</shortName>
        <shortName evidence="1">MECPP-synthase</shortName>
        <shortName evidence="1">MECPS</shortName>
        <ecNumber evidence="1">4.6.1.12</ecNumber>
    </recommendedName>
</protein>
<proteinExistence type="inferred from homology"/>
<gene>
    <name evidence="1" type="primary">ispF</name>
    <name type="ordered locus">Ctha_0565</name>
</gene>
<comment type="function">
    <text evidence="1">Involved in the biosynthesis of isopentenyl diphosphate (IPP) and dimethylallyl diphosphate (DMAPP), two major building blocks of isoprenoid compounds. Catalyzes the conversion of 4-diphosphocytidyl-2-C-methyl-D-erythritol 2-phosphate (CDP-ME2P) to 2-C-methyl-D-erythritol 2,4-cyclodiphosphate (ME-CPP) with a corresponding release of cytidine 5-monophosphate (CMP).</text>
</comment>
<comment type="catalytic activity">
    <reaction evidence="1">
        <text>4-CDP-2-C-methyl-D-erythritol 2-phosphate = 2-C-methyl-D-erythritol 2,4-cyclic diphosphate + CMP</text>
        <dbReference type="Rhea" id="RHEA:23864"/>
        <dbReference type="ChEBI" id="CHEBI:57919"/>
        <dbReference type="ChEBI" id="CHEBI:58483"/>
        <dbReference type="ChEBI" id="CHEBI:60377"/>
        <dbReference type="EC" id="4.6.1.12"/>
    </reaction>
</comment>
<comment type="cofactor">
    <cofactor evidence="1">
        <name>a divalent metal cation</name>
        <dbReference type="ChEBI" id="CHEBI:60240"/>
    </cofactor>
    <text evidence="1">Binds 1 divalent metal cation per subunit.</text>
</comment>
<comment type="pathway">
    <text evidence="1">Isoprenoid biosynthesis; isopentenyl diphosphate biosynthesis via DXP pathway; isopentenyl diphosphate from 1-deoxy-D-xylulose 5-phosphate: step 4/6.</text>
</comment>
<comment type="subunit">
    <text evidence="1">Homotrimer.</text>
</comment>
<comment type="similarity">
    <text evidence="1">Belongs to the IspF family.</text>
</comment>